<protein>
    <recommendedName>
        <fullName evidence="1">Fatty acid oxidation complex subunit alpha</fullName>
    </recommendedName>
    <domain>
        <recommendedName>
            <fullName evidence="1">Enoyl-CoA hydratase/3-hydroxybutyryl-CoA epimerase</fullName>
            <ecNumber evidence="1">4.2.1.17</ecNumber>
            <ecNumber evidence="1">5.1.2.3</ecNumber>
        </recommendedName>
    </domain>
    <domain>
        <recommendedName>
            <fullName evidence="1">3-hydroxyacyl-CoA dehydrogenase</fullName>
            <ecNumber evidence="1">1.1.1.35</ecNumber>
        </recommendedName>
    </domain>
</protein>
<organism>
    <name type="scientific">Pectobacterium carotovorum subsp. carotovorum (strain PC1)</name>
    <dbReference type="NCBI Taxonomy" id="561230"/>
    <lineage>
        <taxon>Bacteria</taxon>
        <taxon>Pseudomonadati</taxon>
        <taxon>Pseudomonadota</taxon>
        <taxon>Gammaproteobacteria</taxon>
        <taxon>Enterobacterales</taxon>
        <taxon>Pectobacteriaceae</taxon>
        <taxon>Pectobacterium</taxon>
    </lineage>
</organism>
<accession>C6DAL7</accession>
<dbReference type="EC" id="4.2.1.17" evidence="1"/>
<dbReference type="EC" id="5.1.2.3" evidence="1"/>
<dbReference type="EC" id="1.1.1.35" evidence="1"/>
<dbReference type="EMBL" id="CP001657">
    <property type="protein sequence ID" value="ACT13851.1"/>
    <property type="molecule type" value="Genomic_DNA"/>
</dbReference>
<dbReference type="RefSeq" id="WP_015841011.1">
    <property type="nucleotide sequence ID" value="NC_012917.1"/>
</dbReference>
<dbReference type="SMR" id="C6DAL7"/>
<dbReference type="STRING" id="561230.PC1_2821"/>
<dbReference type="KEGG" id="pct:PC1_2821"/>
<dbReference type="eggNOG" id="COG1024">
    <property type="taxonomic scope" value="Bacteria"/>
</dbReference>
<dbReference type="eggNOG" id="COG1250">
    <property type="taxonomic scope" value="Bacteria"/>
</dbReference>
<dbReference type="HOGENOM" id="CLU_009834_16_1_6"/>
<dbReference type="OrthoDB" id="5389341at2"/>
<dbReference type="UniPathway" id="UPA00659"/>
<dbReference type="Proteomes" id="UP000002736">
    <property type="component" value="Chromosome"/>
</dbReference>
<dbReference type="GO" id="GO:0005737">
    <property type="term" value="C:cytoplasm"/>
    <property type="evidence" value="ECO:0007669"/>
    <property type="project" value="UniProtKB-SubCell"/>
</dbReference>
<dbReference type="GO" id="GO:0008692">
    <property type="term" value="F:3-hydroxybutyryl-CoA epimerase activity"/>
    <property type="evidence" value="ECO:0007669"/>
    <property type="project" value="UniProtKB-UniRule"/>
</dbReference>
<dbReference type="GO" id="GO:0004300">
    <property type="term" value="F:enoyl-CoA hydratase activity"/>
    <property type="evidence" value="ECO:0007669"/>
    <property type="project" value="UniProtKB-UniRule"/>
</dbReference>
<dbReference type="GO" id="GO:0016509">
    <property type="term" value="F:long-chain-3-hydroxyacyl-CoA dehydrogenase activity"/>
    <property type="evidence" value="ECO:0007669"/>
    <property type="project" value="TreeGrafter"/>
</dbReference>
<dbReference type="GO" id="GO:0070403">
    <property type="term" value="F:NAD+ binding"/>
    <property type="evidence" value="ECO:0007669"/>
    <property type="project" value="InterPro"/>
</dbReference>
<dbReference type="GO" id="GO:0006635">
    <property type="term" value="P:fatty acid beta-oxidation"/>
    <property type="evidence" value="ECO:0007669"/>
    <property type="project" value="UniProtKB-UniRule"/>
</dbReference>
<dbReference type="CDD" id="cd06558">
    <property type="entry name" value="crotonase-like"/>
    <property type="match status" value="1"/>
</dbReference>
<dbReference type="FunFam" id="3.90.226.10:FF:000011">
    <property type="entry name" value="Fatty acid oxidation complex subunit alpha"/>
    <property type="match status" value="1"/>
</dbReference>
<dbReference type="FunFam" id="3.40.50.720:FF:000009">
    <property type="entry name" value="Fatty oxidation complex, alpha subunit"/>
    <property type="match status" value="1"/>
</dbReference>
<dbReference type="Gene3D" id="1.10.1040.50">
    <property type="match status" value="1"/>
</dbReference>
<dbReference type="Gene3D" id="3.90.226.10">
    <property type="entry name" value="2-enoyl-CoA Hydratase, Chain A, domain 1"/>
    <property type="match status" value="1"/>
</dbReference>
<dbReference type="Gene3D" id="3.40.50.720">
    <property type="entry name" value="NAD(P)-binding Rossmann-like Domain"/>
    <property type="match status" value="1"/>
</dbReference>
<dbReference type="HAMAP" id="MF_01617">
    <property type="entry name" value="FadJ"/>
    <property type="match status" value="1"/>
</dbReference>
<dbReference type="InterPro" id="IPR006180">
    <property type="entry name" value="3-OHacyl-CoA_DH_CS"/>
</dbReference>
<dbReference type="InterPro" id="IPR006176">
    <property type="entry name" value="3-OHacyl-CoA_DH_NAD-bd"/>
</dbReference>
<dbReference type="InterPro" id="IPR006108">
    <property type="entry name" value="3HC_DH_C"/>
</dbReference>
<dbReference type="InterPro" id="IPR008927">
    <property type="entry name" value="6-PGluconate_DH-like_C_sf"/>
</dbReference>
<dbReference type="InterPro" id="IPR029045">
    <property type="entry name" value="ClpP/crotonase-like_dom_sf"/>
</dbReference>
<dbReference type="InterPro" id="IPR018376">
    <property type="entry name" value="Enoyl-CoA_hyd/isom_CS"/>
</dbReference>
<dbReference type="InterPro" id="IPR001753">
    <property type="entry name" value="Enoyl-CoA_hydra/iso"/>
</dbReference>
<dbReference type="InterPro" id="IPR050136">
    <property type="entry name" value="FA_oxidation_alpha_subunit"/>
</dbReference>
<dbReference type="InterPro" id="IPR012802">
    <property type="entry name" value="FadJ"/>
</dbReference>
<dbReference type="InterPro" id="IPR036291">
    <property type="entry name" value="NAD(P)-bd_dom_sf"/>
</dbReference>
<dbReference type="NCBIfam" id="TIGR02440">
    <property type="entry name" value="FadJ"/>
    <property type="match status" value="1"/>
</dbReference>
<dbReference type="NCBIfam" id="NF008363">
    <property type="entry name" value="PRK11154.1"/>
    <property type="match status" value="1"/>
</dbReference>
<dbReference type="PANTHER" id="PTHR43612">
    <property type="entry name" value="TRIFUNCTIONAL ENZYME SUBUNIT ALPHA"/>
    <property type="match status" value="1"/>
</dbReference>
<dbReference type="PANTHER" id="PTHR43612:SF3">
    <property type="entry name" value="TRIFUNCTIONAL ENZYME SUBUNIT ALPHA, MITOCHONDRIAL"/>
    <property type="match status" value="1"/>
</dbReference>
<dbReference type="Pfam" id="PF00725">
    <property type="entry name" value="3HCDH"/>
    <property type="match status" value="2"/>
</dbReference>
<dbReference type="Pfam" id="PF02737">
    <property type="entry name" value="3HCDH_N"/>
    <property type="match status" value="1"/>
</dbReference>
<dbReference type="Pfam" id="PF00378">
    <property type="entry name" value="ECH_1"/>
    <property type="match status" value="1"/>
</dbReference>
<dbReference type="SUPFAM" id="SSF48179">
    <property type="entry name" value="6-phosphogluconate dehydrogenase C-terminal domain-like"/>
    <property type="match status" value="2"/>
</dbReference>
<dbReference type="SUPFAM" id="SSF52096">
    <property type="entry name" value="ClpP/crotonase"/>
    <property type="match status" value="1"/>
</dbReference>
<dbReference type="SUPFAM" id="SSF51735">
    <property type="entry name" value="NAD(P)-binding Rossmann-fold domains"/>
    <property type="match status" value="1"/>
</dbReference>
<dbReference type="PROSITE" id="PS00067">
    <property type="entry name" value="3HCDH"/>
    <property type="match status" value="1"/>
</dbReference>
<dbReference type="PROSITE" id="PS00166">
    <property type="entry name" value="ENOYL_COA_HYDRATASE"/>
    <property type="match status" value="1"/>
</dbReference>
<reference key="1">
    <citation type="submission" date="2009-07" db="EMBL/GenBank/DDBJ databases">
        <title>Complete sequence of Pectobacterium carotovorum subsp. carotovorum PC1.</title>
        <authorList>
            <consortium name="US DOE Joint Genome Institute"/>
            <person name="Lucas S."/>
            <person name="Copeland A."/>
            <person name="Lapidus A."/>
            <person name="Glavina del Rio T."/>
            <person name="Tice H."/>
            <person name="Bruce D."/>
            <person name="Goodwin L."/>
            <person name="Pitluck S."/>
            <person name="Munk A.C."/>
            <person name="Brettin T."/>
            <person name="Detter J.C."/>
            <person name="Han C."/>
            <person name="Tapia R."/>
            <person name="Larimer F."/>
            <person name="Land M."/>
            <person name="Hauser L."/>
            <person name="Kyrpides N."/>
            <person name="Mikhailova N."/>
            <person name="Balakrishnan V."/>
            <person name="Glasner J."/>
            <person name="Perna N.T."/>
        </authorList>
    </citation>
    <scope>NUCLEOTIDE SEQUENCE [LARGE SCALE GENOMIC DNA]</scope>
    <source>
        <strain>PC1</strain>
    </source>
</reference>
<evidence type="ECO:0000255" key="1">
    <source>
        <dbReference type="HAMAP-Rule" id="MF_01617"/>
    </source>
</evidence>
<keyword id="KW-0963">Cytoplasm</keyword>
<keyword id="KW-0276">Fatty acid metabolism</keyword>
<keyword id="KW-0413">Isomerase</keyword>
<keyword id="KW-0442">Lipid degradation</keyword>
<keyword id="KW-0443">Lipid metabolism</keyword>
<keyword id="KW-0456">Lyase</keyword>
<keyword id="KW-0511">Multifunctional enzyme</keyword>
<keyword id="KW-0520">NAD</keyword>
<keyword id="KW-0560">Oxidoreductase</keyword>
<sequence length="727" mass="79712">MNDQQPFSAITESPSAFSLTIRPDNIGVIGIDVPGEKVNTLKSEFAQQILSVFEQARQHATLRGLILISSKPDSFIAGADITMLNQCRSAEQAENLAKQGQETFEQIAALPFPVVAAIHGACLGGGLELALACDYRVCSLDEKTVLGLPEVQLGLLPGSGGTQRLPRLIGLDSALDLILTGRHLRANQALRQGLVDEAVPHDILLDTAVEMLKKGKRKAEPLGWRSRLLSSPGIRHVLFKMVKRKTRAKTHGNYPATEKIIQVVRRGVEKGREEGYRQEARAFGKLVMTPESAALRHLFFASNALKKTSGAASDAKPIHYVGILGGGLMGGGIASVTATRGQLPVRIKDINEQGINHALKYNWQLLTQRVQRKRMKPTERQRLMTLISGSTDYRGFEHADIVIEAVFEDLALKRQMVAEIEDHAAPHTIFASNTSSLPIHQIAEGARRPQQVIGLHYFSPVDKMPLVEVIPHAHTSAETVATTVALARKQGKTAIVVGDSAGFYVNRILAPYINEAAYCLLEGEPIESIDYALVRFGFPVGPFALLDEVGIDVATKIVPVLSEELGTRFTSPPAFDAILKDGRKGRKNGKGFYRYNKTRRFWQTGREVDSSIYPLLDVTAKAHIDPALISQRGVMMMLNEAARCLDEGVIQCARDGDIGAVFGIGFPPFLGGPFHYMDRLGMETVVKTLLVLQQQYGDRFAPCERLLAMREGQRTFYPPTDEDDSAS</sequence>
<proteinExistence type="inferred from homology"/>
<name>FADJ_PECCP</name>
<feature type="chain" id="PRO_1000215731" description="Fatty acid oxidation complex subunit alpha">
    <location>
        <begin position="1"/>
        <end position="727"/>
    </location>
</feature>
<feature type="region of interest" description="Enoyl-CoA hydratase" evidence="1">
    <location>
        <begin position="1"/>
        <end position="200"/>
    </location>
</feature>
<feature type="region of interest" description="3-hydroxyacyl-CoA dehydrogenase" evidence="1">
    <location>
        <begin position="316"/>
        <end position="727"/>
    </location>
</feature>
<feature type="site" description="Important for catalytic activity" evidence="1">
    <location>
        <position position="128"/>
    </location>
</feature>
<feature type="site" description="Important for catalytic activity" evidence="1">
    <location>
        <position position="150"/>
    </location>
</feature>
<gene>
    <name evidence="1" type="primary">fadJ</name>
    <name type="ordered locus">PC1_2821</name>
</gene>
<comment type="function">
    <text evidence="1">Catalyzes the formation of a hydroxyacyl-CoA by addition of water on enoyl-CoA. Also exhibits 3-hydroxyacyl-CoA epimerase and 3-hydroxyacyl-CoA dehydrogenase activities.</text>
</comment>
<comment type="catalytic activity">
    <reaction evidence="1">
        <text>a (3S)-3-hydroxyacyl-CoA = a (2E)-enoyl-CoA + H2O</text>
        <dbReference type="Rhea" id="RHEA:16105"/>
        <dbReference type="ChEBI" id="CHEBI:15377"/>
        <dbReference type="ChEBI" id="CHEBI:57318"/>
        <dbReference type="ChEBI" id="CHEBI:58856"/>
        <dbReference type="EC" id="4.2.1.17"/>
    </reaction>
</comment>
<comment type="catalytic activity">
    <reaction evidence="1">
        <text>a 4-saturated-(3S)-3-hydroxyacyl-CoA = a (3E)-enoyl-CoA + H2O</text>
        <dbReference type="Rhea" id="RHEA:20724"/>
        <dbReference type="ChEBI" id="CHEBI:15377"/>
        <dbReference type="ChEBI" id="CHEBI:58521"/>
        <dbReference type="ChEBI" id="CHEBI:137480"/>
        <dbReference type="EC" id="4.2.1.17"/>
    </reaction>
</comment>
<comment type="catalytic activity">
    <reaction evidence="1">
        <text>a (3S)-3-hydroxyacyl-CoA + NAD(+) = a 3-oxoacyl-CoA + NADH + H(+)</text>
        <dbReference type="Rhea" id="RHEA:22432"/>
        <dbReference type="ChEBI" id="CHEBI:15378"/>
        <dbReference type="ChEBI" id="CHEBI:57318"/>
        <dbReference type="ChEBI" id="CHEBI:57540"/>
        <dbReference type="ChEBI" id="CHEBI:57945"/>
        <dbReference type="ChEBI" id="CHEBI:90726"/>
        <dbReference type="EC" id="1.1.1.35"/>
    </reaction>
</comment>
<comment type="catalytic activity">
    <reaction evidence="1">
        <text>(3S)-3-hydroxybutanoyl-CoA = (3R)-3-hydroxybutanoyl-CoA</text>
        <dbReference type="Rhea" id="RHEA:21760"/>
        <dbReference type="ChEBI" id="CHEBI:57315"/>
        <dbReference type="ChEBI" id="CHEBI:57316"/>
        <dbReference type="EC" id="5.1.2.3"/>
    </reaction>
</comment>
<comment type="pathway">
    <text evidence="1">Lipid metabolism; fatty acid beta-oxidation.</text>
</comment>
<comment type="subunit">
    <text evidence="1">Heterotetramer of two alpha chains (FadJ) and two beta chains (FadI).</text>
</comment>
<comment type="subcellular location">
    <subcellularLocation>
        <location evidence="1">Cytoplasm</location>
    </subcellularLocation>
</comment>
<comment type="similarity">
    <text evidence="1">In the N-terminal section; belongs to the enoyl-CoA hydratase/isomerase family.</text>
</comment>
<comment type="similarity">
    <text evidence="1">In the central section; belongs to the 3-hydroxyacyl-CoA dehydrogenase family.</text>
</comment>